<evidence type="ECO:0000255" key="1">
    <source>
        <dbReference type="HAMAP-Rule" id="MF_00052"/>
    </source>
</evidence>
<evidence type="ECO:0000255" key="2">
    <source>
        <dbReference type="PROSITE-ProRule" id="PRU01319"/>
    </source>
</evidence>
<name>RNH2_LEGPA</name>
<keyword id="KW-0963">Cytoplasm</keyword>
<keyword id="KW-0255">Endonuclease</keyword>
<keyword id="KW-0378">Hydrolase</keyword>
<keyword id="KW-0464">Manganese</keyword>
<keyword id="KW-0479">Metal-binding</keyword>
<keyword id="KW-0540">Nuclease</keyword>
<accession>Q5X5J3</accession>
<dbReference type="EC" id="3.1.26.4" evidence="1"/>
<dbReference type="EMBL" id="CR628336">
    <property type="protein sequence ID" value="CAH12478.1"/>
    <property type="molecule type" value="Genomic_DNA"/>
</dbReference>
<dbReference type="RefSeq" id="WP_011213669.1">
    <property type="nucleotide sequence ID" value="NC_006368.1"/>
</dbReference>
<dbReference type="SMR" id="Q5X5J3"/>
<dbReference type="KEGG" id="lpp:lpp1327"/>
<dbReference type="LegioList" id="lpp1327"/>
<dbReference type="HOGENOM" id="CLU_036532_3_2_6"/>
<dbReference type="GO" id="GO:0005737">
    <property type="term" value="C:cytoplasm"/>
    <property type="evidence" value="ECO:0007669"/>
    <property type="project" value="UniProtKB-SubCell"/>
</dbReference>
<dbReference type="GO" id="GO:0032299">
    <property type="term" value="C:ribonuclease H2 complex"/>
    <property type="evidence" value="ECO:0007669"/>
    <property type="project" value="TreeGrafter"/>
</dbReference>
<dbReference type="GO" id="GO:0030145">
    <property type="term" value="F:manganese ion binding"/>
    <property type="evidence" value="ECO:0007669"/>
    <property type="project" value="UniProtKB-UniRule"/>
</dbReference>
<dbReference type="GO" id="GO:0003723">
    <property type="term" value="F:RNA binding"/>
    <property type="evidence" value="ECO:0007669"/>
    <property type="project" value="InterPro"/>
</dbReference>
<dbReference type="GO" id="GO:0004523">
    <property type="term" value="F:RNA-DNA hybrid ribonuclease activity"/>
    <property type="evidence" value="ECO:0007669"/>
    <property type="project" value="UniProtKB-UniRule"/>
</dbReference>
<dbReference type="GO" id="GO:0043137">
    <property type="term" value="P:DNA replication, removal of RNA primer"/>
    <property type="evidence" value="ECO:0007669"/>
    <property type="project" value="TreeGrafter"/>
</dbReference>
<dbReference type="GO" id="GO:0006298">
    <property type="term" value="P:mismatch repair"/>
    <property type="evidence" value="ECO:0007669"/>
    <property type="project" value="TreeGrafter"/>
</dbReference>
<dbReference type="CDD" id="cd07182">
    <property type="entry name" value="RNase_HII_bacteria_HII_like"/>
    <property type="match status" value="1"/>
</dbReference>
<dbReference type="FunFam" id="3.30.420.10:FF:000006">
    <property type="entry name" value="Ribonuclease HII"/>
    <property type="match status" value="1"/>
</dbReference>
<dbReference type="Gene3D" id="3.30.420.10">
    <property type="entry name" value="Ribonuclease H-like superfamily/Ribonuclease H"/>
    <property type="match status" value="1"/>
</dbReference>
<dbReference type="HAMAP" id="MF_00052_B">
    <property type="entry name" value="RNase_HII_B"/>
    <property type="match status" value="1"/>
</dbReference>
<dbReference type="InterPro" id="IPR022898">
    <property type="entry name" value="RNase_HII"/>
</dbReference>
<dbReference type="InterPro" id="IPR001352">
    <property type="entry name" value="RNase_HII/HIII"/>
</dbReference>
<dbReference type="InterPro" id="IPR024567">
    <property type="entry name" value="RNase_HII/HIII_dom"/>
</dbReference>
<dbReference type="InterPro" id="IPR012337">
    <property type="entry name" value="RNaseH-like_sf"/>
</dbReference>
<dbReference type="InterPro" id="IPR036397">
    <property type="entry name" value="RNaseH_sf"/>
</dbReference>
<dbReference type="NCBIfam" id="NF000595">
    <property type="entry name" value="PRK00015.1-3"/>
    <property type="match status" value="1"/>
</dbReference>
<dbReference type="NCBIfam" id="NF000596">
    <property type="entry name" value="PRK00015.1-4"/>
    <property type="match status" value="1"/>
</dbReference>
<dbReference type="PANTHER" id="PTHR10954">
    <property type="entry name" value="RIBONUCLEASE H2 SUBUNIT A"/>
    <property type="match status" value="1"/>
</dbReference>
<dbReference type="PANTHER" id="PTHR10954:SF18">
    <property type="entry name" value="RIBONUCLEASE HII"/>
    <property type="match status" value="1"/>
</dbReference>
<dbReference type="Pfam" id="PF01351">
    <property type="entry name" value="RNase_HII"/>
    <property type="match status" value="1"/>
</dbReference>
<dbReference type="SUPFAM" id="SSF53098">
    <property type="entry name" value="Ribonuclease H-like"/>
    <property type="match status" value="1"/>
</dbReference>
<dbReference type="PROSITE" id="PS51975">
    <property type="entry name" value="RNASE_H_2"/>
    <property type="match status" value="1"/>
</dbReference>
<organism>
    <name type="scientific">Legionella pneumophila (strain Paris)</name>
    <dbReference type="NCBI Taxonomy" id="297246"/>
    <lineage>
        <taxon>Bacteria</taxon>
        <taxon>Pseudomonadati</taxon>
        <taxon>Pseudomonadota</taxon>
        <taxon>Gammaproteobacteria</taxon>
        <taxon>Legionellales</taxon>
        <taxon>Legionellaceae</taxon>
        <taxon>Legionella</taxon>
    </lineage>
</organism>
<reference key="1">
    <citation type="journal article" date="2004" name="Nat. Genet.">
        <title>Evidence in the Legionella pneumophila genome for exploitation of host cell functions and high genome plasticity.</title>
        <authorList>
            <person name="Cazalet C."/>
            <person name="Rusniok C."/>
            <person name="Brueggemann H."/>
            <person name="Zidane N."/>
            <person name="Magnier A."/>
            <person name="Ma L."/>
            <person name="Tichit M."/>
            <person name="Jarraud S."/>
            <person name="Bouchier C."/>
            <person name="Vandenesch F."/>
            <person name="Kunst F."/>
            <person name="Etienne J."/>
            <person name="Glaser P."/>
            <person name="Buchrieser C."/>
        </authorList>
    </citation>
    <scope>NUCLEOTIDE SEQUENCE [LARGE SCALE GENOMIC DNA]</scope>
    <source>
        <strain>Paris</strain>
    </source>
</reference>
<feature type="chain" id="PRO_1000031158" description="Ribonuclease HII">
    <location>
        <begin position="1"/>
        <end position="191"/>
    </location>
</feature>
<feature type="domain" description="RNase H type-2" evidence="2">
    <location>
        <begin position="7"/>
        <end position="191"/>
    </location>
</feature>
<feature type="binding site" evidence="1">
    <location>
        <position position="13"/>
    </location>
    <ligand>
        <name>a divalent metal cation</name>
        <dbReference type="ChEBI" id="CHEBI:60240"/>
    </ligand>
</feature>
<feature type="binding site" evidence="1">
    <location>
        <position position="14"/>
    </location>
    <ligand>
        <name>a divalent metal cation</name>
        <dbReference type="ChEBI" id="CHEBI:60240"/>
    </ligand>
</feature>
<feature type="binding site" evidence="1">
    <location>
        <position position="103"/>
    </location>
    <ligand>
        <name>a divalent metal cation</name>
        <dbReference type="ChEBI" id="CHEBI:60240"/>
    </ligand>
</feature>
<gene>
    <name evidence="1" type="primary">rnhB</name>
    <name type="ordered locus">lpp1327</name>
</gene>
<sequence>MNTELKILMAGVDEVGRGPLAGAVVTAAVILKKPIDGLTDSKKLSPKQRNLLAIRIKEEALAFAYGRAEVEEIDQLNIHHATLLAMRRAVEALPIQPDNVVVDGAFTPQLNIPCKAIVQGDSLIPEISAASILAKVLRDEEMVALDKIYPGYGFAEHKGYATPVHKEALMRLGPCKIHRRSYSPVADLISK</sequence>
<comment type="function">
    <text evidence="1">Endonuclease that specifically degrades the RNA of RNA-DNA hybrids.</text>
</comment>
<comment type="catalytic activity">
    <reaction evidence="1">
        <text>Endonucleolytic cleavage to 5'-phosphomonoester.</text>
        <dbReference type="EC" id="3.1.26.4"/>
    </reaction>
</comment>
<comment type="cofactor">
    <cofactor evidence="1">
        <name>Mn(2+)</name>
        <dbReference type="ChEBI" id="CHEBI:29035"/>
    </cofactor>
    <cofactor evidence="1">
        <name>Mg(2+)</name>
        <dbReference type="ChEBI" id="CHEBI:18420"/>
    </cofactor>
    <text evidence="1">Manganese or magnesium. Binds 1 divalent metal ion per monomer in the absence of substrate. May bind a second metal ion after substrate binding.</text>
</comment>
<comment type="subcellular location">
    <subcellularLocation>
        <location evidence="1">Cytoplasm</location>
    </subcellularLocation>
</comment>
<comment type="similarity">
    <text evidence="1">Belongs to the RNase HII family.</text>
</comment>
<protein>
    <recommendedName>
        <fullName evidence="1">Ribonuclease HII</fullName>
        <shortName evidence="1">RNase HII</shortName>
        <ecNumber evidence="1">3.1.26.4</ecNumber>
    </recommendedName>
</protein>
<proteinExistence type="inferred from homology"/>